<sequence>MAIVLGIDPGSRVTGYGVIRQQGRQLTYLGSGCIRTVVDDMPTRLKLIYAGVTEIITQFQPDFFAIEQVFMAKNPDSALKLGQARGAAIVAAVNLNLPVSEYAARQVKQTVVGTGAAEKSQVQHMVRSLLKLPANPQADAADALAIAITHCHLSQNTLRLGNDQMTLSRGRIR</sequence>
<evidence type="ECO:0000255" key="1">
    <source>
        <dbReference type="HAMAP-Rule" id="MF_00034"/>
    </source>
</evidence>
<feature type="chain" id="PRO_1000090579" description="Crossover junction endodeoxyribonuclease RuvC">
    <location>
        <begin position="1"/>
        <end position="173"/>
    </location>
</feature>
<feature type="active site" evidence="1">
    <location>
        <position position="8"/>
    </location>
</feature>
<feature type="active site" evidence="1">
    <location>
        <position position="67"/>
    </location>
</feature>
<feature type="active site" evidence="1">
    <location>
        <position position="139"/>
    </location>
</feature>
<feature type="binding site" evidence="1">
    <location>
        <position position="8"/>
    </location>
    <ligand>
        <name>Mg(2+)</name>
        <dbReference type="ChEBI" id="CHEBI:18420"/>
        <label>1</label>
    </ligand>
</feature>
<feature type="binding site" evidence="1">
    <location>
        <position position="67"/>
    </location>
    <ligand>
        <name>Mg(2+)</name>
        <dbReference type="ChEBI" id="CHEBI:18420"/>
        <label>2</label>
    </ligand>
</feature>
<feature type="binding site" evidence="1">
    <location>
        <position position="139"/>
    </location>
    <ligand>
        <name>Mg(2+)</name>
        <dbReference type="ChEBI" id="CHEBI:18420"/>
        <label>1</label>
    </ligand>
</feature>
<accession>B1JLL2</accession>
<protein>
    <recommendedName>
        <fullName evidence="1">Crossover junction endodeoxyribonuclease RuvC</fullName>
        <ecNumber evidence="1">3.1.21.10</ecNumber>
    </recommendedName>
    <alternativeName>
        <fullName evidence="1">Holliday junction nuclease RuvC</fullName>
    </alternativeName>
    <alternativeName>
        <fullName evidence="1">Holliday junction resolvase RuvC</fullName>
    </alternativeName>
</protein>
<gene>
    <name evidence="1" type="primary">ruvC</name>
    <name type="ordered locus">YPK_2145</name>
</gene>
<reference key="1">
    <citation type="submission" date="2008-02" db="EMBL/GenBank/DDBJ databases">
        <title>Complete sequence of Yersinia pseudotuberculosis YPIII.</title>
        <authorList>
            <consortium name="US DOE Joint Genome Institute"/>
            <person name="Copeland A."/>
            <person name="Lucas S."/>
            <person name="Lapidus A."/>
            <person name="Glavina del Rio T."/>
            <person name="Dalin E."/>
            <person name="Tice H."/>
            <person name="Bruce D."/>
            <person name="Goodwin L."/>
            <person name="Pitluck S."/>
            <person name="Munk A.C."/>
            <person name="Brettin T."/>
            <person name="Detter J.C."/>
            <person name="Han C."/>
            <person name="Tapia R."/>
            <person name="Schmutz J."/>
            <person name="Larimer F."/>
            <person name="Land M."/>
            <person name="Hauser L."/>
            <person name="Challacombe J.F."/>
            <person name="Green L."/>
            <person name="Lindler L.E."/>
            <person name="Nikolich M.P."/>
            <person name="Richardson P."/>
        </authorList>
    </citation>
    <scope>NUCLEOTIDE SEQUENCE [LARGE SCALE GENOMIC DNA]</scope>
    <source>
        <strain>YPIII</strain>
    </source>
</reference>
<comment type="function">
    <text evidence="1">The RuvA-RuvB-RuvC complex processes Holliday junction (HJ) DNA during genetic recombination and DNA repair. Endonuclease that resolves HJ intermediates. Cleaves cruciform DNA by making single-stranded nicks across the HJ at symmetrical positions within the homologous arms, yielding a 5'-phosphate and a 3'-hydroxyl group; requires a central core of homology in the junction. The consensus cleavage sequence is 5'-(A/T)TT(C/G)-3'. Cleavage occurs on the 3'-side of the TT dinucleotide at the point of strand exchange. HJ branch migration catalyzed by RuvA-RuvB allows RuvC to scan DNA until it finds its consensus sequence, where it cleaves and resolves the cruciform DNA.</text>
</comment>
<comment type="catalytic activity">
    <reaction evidence="1">
        <text>Endonucleolytic cleavage at a junction such as a reciprocal single-stranded crossover between two homologous DNA duplexes (Holliday junction).</text>
        <dbReference type="EC" id="3.1.21.10"/>
    </reaction>
</comment>
<comment type="cofactor">
    <cofactor evidence="1">
        <name>Mg(2+)</name>
        <dbReference type="ChEBI" id="CHEBI:18420"/>
    </cofactor>
    <text evidence="1">Binds 2 Mg(2+) ion per subunit.</text>
</comment>
<comment type="subunit">
    <text evidence="1">Homodimer which binds Holliday junction (HJ) DNA. The HJ becomes 2-fold symmetrical on binding to RuvC with unstacked arms; it has a different conformation from HJ DNA in complex with RuvA. In the full resolvosome a probable DNA-RuvA(4)-RuvB(12)-RuvC(2) complex forms which resolves the HJ.</text>
</comment>
<comment type="subcellular location">
    <subcellularLocation>
        <location evidence="1">Cytoplasm</location>
    </subcellularLocation>
</comment>
<comment type="similarity">
    <text evidence="1">Belongs to the RuvC family.</text>
</comment>
<name>RUVC_YERPY</name>
<organism>
    <name type="scientific">Yersinia pseudotuberculosis serotype O:3 (strain YPIII)</name>
    <dbReference type="NCBI Taxonomy" id="502800"/>
    <lineage>
        <taxon>Bacteria</taxon>
        <taxon>Pseudomonadati</taxon>
        <taxon>Pseudomonadota</taxon>
        <taxon>Gammaproteobacteria</taxon>
        <taxon>Enterobacterales</taxon>
        <taxon>Yersiniaceae</taxon>
        <taxon>Yersinia</taxon>
    </lineage>
</organism>
<proteinExistence type="inferred from homology"/>
<dbReference type="EC" id="3.1.21.10" evidence="1"/>
<dbReference type="EMBL" id="CP000950">
    <property type="protein sequence ID" value="ACA68431.1"/>
    <property type="molecule type" value="Genomic_DNA"/>
</dbReference>
<dbReference type="RefSeq" id="WP_002211201.1">
    <property type="nucleotide sequence ID" value="NZ_CP009792.1"/>
</dbReference>
<dbReference type="SMR" id="B1JLL2"/>
<dbReference type="GeneID" id="57976605"/>
<dbReference type="KEGG" id="ypy:YPK_2145"/>
<dbReference type="PATRIC" id="fig|502800.11.peg.2818"/>
<dbReference type="GO" id="GO:0005737">
    <property type="term" value="C:cytoplasm"/>
    <property type="evidence" value="ECO:0007669"/>
    <property type="project" value="UniProtKB-SubCell"/>
</dbReference>
<dbReference type="GO" id="GO:0048476">
    <property type="term" value="C:Holliday junction resolvase complex"/>
    <property type="evidence" value="ECO:0007669"/>
    <property type="project" value="UniProtKB-UniRule"/>
</dbReference>
<dbReference type="GO" id="GO:0008821">
    <property type="term" value="F:crossover junction DNA endonuclease activity"/>
    <property type="evidence" value="ECO:0007669"/>
    <property type="project" value="UniProtKB-UniRule"/>
</dbReference>
<dbReference type="GO" id="GO:0003677">
    <property type="term" value="F:DNA binding"/>
    <property type="evidence" value="ECO:0007669"/>
    <property type="project" value="UniProtKB-KW"/>
</dbReference>
<dbReference type="GO" id="GO:0000287">
    <property type="term" value="F:magnesium ion binding"/>
    <property type="evidence" value="ECO:0007669"/>
    <property type="project" value="UniProtKB-UniRule"/>
</dbReference>
<dbReference type="GO" id="GO:0006310">
    <property type="term" value="P:DNA recombination"/>
    <property type="evidence" value="ECO:0007669"/>
    <property type="project" value="UniProtKB-UniRule"/>
</dbReference>
<dbReference type="GO" id="GO:0006281">
    <property type="term" value="P:DNA repair"/>
    <property type="evidence" value="ECO:0007669"/>
    <property type="project" value="UniProtKB-UniRule"/>
</dbReference>
<dbReference type="CDD" id="cd16962">
    <property type="entry name" value="RuvC"/>
    <property type="match status" value="1"/>
</dbReference>
<dbReference type="FunFam" id="3.30.420.10:FF:000002">
    <property type="entry name" value="Crossover junction endodeoxyribonuclease RuvC"/>
    <property type="match status" value="1"/>
</dbReference>
<dbReference type="Gene3D" id="3.30.420.10">
    <property type="entry name" value="Ribonuclease H-like superfamily/Ribonuclease H"/>
    <property type="match status" value="1"/>
</dbReference>
<dbReference type="HAMAP" id="MF_00034">
    <property type="entry name" value="RuvC"/>
    <property type="match status" value="1"/>
</dbReference>
<dbReference type="InterPro" id="IPR012337">
    <property type="entry name" value="RNaseH-like_sf"/>
</dbReference>
<dbReference type="InterPro" id="IPR036397">
    <property type="entry name" value="RNaseH_sf"/>
</dbReference>
<dbReference type="InterPro" id="IPR020563">
    <property type="entry name" value="X-over_junc_endoDNase_Mg_BS"/>
</dbReference>
<dbReference type="InterPro" id="IPR002176">
    <property type="entry name" value="X-over_junc_endoDNase_RuvC"/>
</dbReference>
<dbReference type="NCBIfam" id="TIGR00228">
    <property type="entry name" value="ruvC"/>
    <property type="match status" value="1"/>
</dbReference>
<dbReference type="PANTHER" id="PTHR30194">
    <property type="entry name" value="CROSSOVER JUNCTION ENDODEOXYRIBONUCLEASE RUVC"/>
    <property type="match status" value="1"/>
</dbReference>
<dbReference type="PANTHER" id="PTHR30194:SF3">
    <property type="entry name" value="CROSSOVER JUNCTION ENDODEOXYRIBONUCLEASE RUVC"/>
    <property type="match status" value="1"/>
</dbReference>
<dbReference type="Pfam" id="PF02075">
    <property type="entry name" value="RuvC"/>
    <property type="match status" value="1"/>
</dbReference>
<dbReference type="PRINTS" id="PR00696">
    <property type="entry name" value="RSOLVASERUVC"/>
</dbReference>
<dbReference type="SUPFAM" id="SSF53098">
    <property type="entry name" value="Ribonuclease H-like"/>
    <property type="match status" value="1"/>
</dbReference>
<dbReference type="PROSITE" id="PS01321">
    <property type="entry name" value="RUVC"/>
    <property type="match status" value="1"/>
</dbReference>
<keyword id="KW-0963">Cytoplasm</keyword>
<keyword id="KW-0227">DNA damage</keyword>
<keyword id="KW-0233">DNA recombination</keyword>
<keyword id="KW-0234">DNA repair</keyword>
<keyword id="KW-0238">DNA-binding</keyword>
<keyword id="KW-0255">Endonuclease</keyword>
<keyword id="KW-0378">Hydrolase</keyword>
<keyword id="KW-0460">Magnesium</keyword>
<keyword id="KW-0479">Metal-binding</keyword>
<keyword id="KW-0540">Nuclease</keyword>